<name>AIM18_EREGS</name>
<sequence length="304" mass="33592">MLNKRISNLATILRFIALPRARNIIAPQEYIANSVPVAITRRAARNTFVFSVALTPFVLYSAFHNDSAESDFPELVEVYPGVRPFPAVLGPPELPLQTNYKLLGHGVRAVTFLSFKVYALGIYAAVDDLPLIPRTLSAEYLSTLDTEKVDAPAKEQLYKAMQDHEKSRAVVNDLLGKGLRLVAKITPIRNTDFTHLKDGLVKSILNHPAARHEGETLANGLEELRAAFTRRGSVPKDDDLVLELQATGALQLYHRDAKTGQTTTLGKVTEPLIGRYLFSQYLSGKAPLSKDTKDSVTRKIISMV</sequence>
<accession>Q75DU9</accession>
<feature type="transit peptide" description="Mitochondrion" evidence="2">
    <location>
        <begin position="1"/>
        <end position="42"/>
    </location>
</feature>
<feature type="chain" id="PRO_0000399549" description="Altered inheritance of mitochondria protein 18, mitochondrial">
    <location>
        <begin position="43"/>
        <end position="304"/>
    </location>
</feature>
<protein>
    <recommendedName>
        <fullName>Altered inheritance of mitochondria protein 18, mitochondrial</fullName>
    </recommendedName>
</protein>
<evidence type="ECO:0000250" key="1"/>
<evidence type="ECO:0000255" key="2"/>
<evidence type="ECO:0000305" key="3"/>
<proteinExistence type="inferred from homology"/>
<organism>
    <name type="scientific">Eremothecium gossypii (strain ATCC 10895 / CBS 109.51 / FGSC 9923 / NRRL Y-1056)</name>
    <name type="common">Yeast</name>
    <name type="synonym">Ashbya gossypii</name>
    <dbReference type="NCBI Taxonomy" id="284811"/>
    <lineage>
        <taxon>Eukaryota</taxon>
        <taxon>Fungi</taxon>
        <taxon>Dikarya</taxon>
        <taxon>Ascomycota</taxon>
        <taxon>Saccharomycotina</taxon>
        <taxon>Saccharomycetes</taxon>
        <taxon>Saccharomycetales</taxon>
        <taxon>Saccharomycetaceae</taxon>
        <taxon>Eremothecium</taxon>
    </lineage>
</organism>
<keyword id="KW-0496">Mitochondrion</keyword>
<keyword id="KW-1185">Reference proteome</keyword>
<keyword id="KW-0809">Transit peptide</keyword>
<gene>
    <name type="primary">AIM18</name>
    <name type="synonym">FMP22</name>
    <name type="ordered locus">ABL076W</name>
</gene>
<dbReference type="EMBL" id="AE016815">
    <property type="protein sequence ID" value="AAS50695.1"/>
    <property type="molecule type" value="Genomic_DNA"/>
</dbReference>
<dbReference type="RefSeq" id="NP_982871.1">
    <property type="nucleotide sequence ID" value="NM_208224.1"/>
</dbReference>
<dbReference type="SMR" id="Q75DU9"/>
<dbReference type="FunCoup" id="Q75DU9">
    <property type="interactions" value="43"/>
</dbReference>
<dbReference type="STRING" id="284811.Q75DU9"/>
<dbReference type="EnsemblFungi" id="AAS50695">
    <property type="protein sequence ID" value="AAS50695"/>
    <property type="gene ID" value="AGOS_ABL076W"/>
</dbReference>
<dbReference type="GeneID" id="4618952"/>
<dbReference type="KEGG" id="ago:AGOS_ABL076W"/>
<dbReference type="eggNOG" id="ENOG502RGD3">
    <property type="taxonomic scope" value="Eukaryota"/>
</dbReference>
<dbReference type="HOGENOM" id="CLU_038840_0_1_1"/>
<dbReference type="InParanoid" id="Q75DU9"/>
<dbReference type="OMA" id="PMRNTNF"/>
<dbReference type="OrthoDB" id="18193at2759"/>
<dbReference type="Proteomes" id="UP000000591">
    <property type="component" value="Chromosome II"/>
</dbReference>
<dbReference type="GO" id="GO:0005739">
    <property type="term" value="C:mitochondrion"/>
    <property type="evidence" value="ECO:0007669"/>
    <property type="project" value="UniProtKB-SubCell"/>
</dbReference>
<dbReference type="GO" id="GO:0016872">
    <property type="term" value="F:intramolecular lyase activity"/>
    <property type="evidence" value="ECO:0007669"/>
    <property type="project" value="InterPro"/>
</dbReference>
<dbReference type="Gene3D" id="3.50.70.10">
    <property type="match status" value="1"/>
</dbReference>
<dbReference type="InterPro" id="IPR016087">
    <property type="entry name" value="Chalcone_isomerase"/>
</dbReference>
<dbReference type="InterPro" id="IPR016088">
    <property type="entry name" value="Chalcone_isomerase_3-sand"/>
</dbReference>
<dbReference type="InterPro" id="IPR036298">
    <property type="entry name" value="Chalcone_isomerase_sf"/>
</dbReference>
<dbReference type="PANTHER" id="PTHR47284">
    <property type="entry name" value="FATTY-ACID-BINDING PROTEIN 2"/>
    <property type="match status" value="1"/>
</dbReference>
<dbReference type="PANTHER" id="PTHR47284:SF3">
    <property type="entry name" value="FATTY-ACID-BINDING PROTEIN 2"/>
    <property type="match status" value="1"/>
</dbReference>
<dbReference type="Pfam" id="PF16035">
    <property type="entry name" value="Chalcone_2"/>
    <property type="match status" value="1"/>
</dbReference>
<dbReference type="SUPFAM" id="SSF54626">
    <property type="entry name" value="Chalcone isomerase"/>
    <property type="match status" value="1"/>
</dbReference>
<reference key="1">
    <citation type="journal article" date="2004" name="Science">
        <title>The Ashbya gossypii genome as a tool for mapping the ancient Saccharomyces cerevisiae genome.</title>
        <authorList>
            <person name="Dietrich F.S."/>
            <person name="Voegeli S."/>
            <person name="Brachat S."/>
            <person name="Lerch A."/>
            <person name="Gates K."/>
            <person name="Steiner S."/>
            <person name="Mohr C."/>
            <person name="Poehlmann R."/>
            <person name="Luedi P."/>
            <person name="Choi S."/>
            <person name="Wing R.A."/>
            <person name="Flavier A."/>
            <person name="Gaffney T.D."/>
            <person name="Philippsen P."/>
        </authorList>
    </citation>
    <scope>NUCLEOTIDE SEQUENCE [LARGE SCALE GENOMIC DNA]</scope>
    <source>
        <strain>ATCC 10895 / CBS 109.51 / FGSC 9923 / NRRL Y-1056</strain>
    </source>
</reference>
<reference key="2">
    <citation type="journal article" date="2013" name="G3 (Bethesda)">
        <title>Genomes of Ashbya fungi isolated from insects reveal four mating-type loci, numerous translocations, lack of transposons, and distinct gene duplications.</title>
        <authorList>
            <person name="Dietrich F.S."/>
            <person name="Voegeli S."/>
            <person name="Kuo S."/>
            <person name="Philippsen P."/>
        </authorList>
    </citation>
    <scope>GENOME REANNOTATION</scope>
    <source>
        <strain>ATCC 10895 / CBS 109.51 / FGSC 9923 / NRRL Y-1056</strain>
    </source>
</reference>
<comment type="subcellular location">
    <subcellularLocation>
        <location evidence="1">Mitochondrion</location>
    </subcellularLocation>
</comment>
<comment type="similarity">
    <text evidence="3">Belongs to the AIM18/AIM46 family.</text>
</comment>